<accession>Q65VY2</accession>
<dbReference type="EC" id="3.4.25.2" evidence="2"/>
<dbReference type="EMBL" id="AE016827">
    <property type="protein sequence ID" value="AAU36878.1"/>
    <property type="molecule type" value="Genomic_DNA"/>
</dbReference>
<dbReference type="RefSeq" id="WP_011199453.1">
    <property type="nucleotide sequence ID" value="NC_006300.1"/>
</dbReference>
<dbReference type="SMR" id="Q65VY2"/>
<dbReference type="STRING" id="221988.MS0271"/>
<dbReference type="MEROPS" id="T01.007"/>
<dbReference type="KEGG" id="msu:MS0271"/>
<dbReference type="eggNOG" id="COG5405">
    <property type="taxonomic scope" value="Bacteria"/>
</dbReference>
<dbReference type="HOGENOM" id="CLU_093872_1_0_6"/>
<dbReference type="OrthoDB" id="9804884at2"/>
<dbReference type="Proteomes" id="UP000000607">
    <property type="component" value="Chromosome"/>
</dbReference>
<dbReference type="GO" id="GO:0009376">
    <property type="term" value="C:HslUV protease complex"/>
    <property type="evidence" value="ECO:0007669"/>
    <property type="project" value="UniProtKB-UniRule"/>
</dbReference>
<dbReference type="GO" id="GO:0005839">
    <property type="term" value="C:proteasome core complex"/>
    <property type="evidence" value="ECO:0007669"/>
    <property type="project" value="InterPro"/>
</dbReference>
<dbReference type="GO" id="GO:0046872">
    <property type="term" value="F:metal ion binding"/>
    <property type="evidence" value="ECO:0007669"/>
    <property type="project" value="UniProtKB-KW"/>
</dbReference>
<dbReference type="GO" id="GO:0004298">
    <property type="term" value="F:threonine-type endopeptidase activity"/>
    <property type="evidence" value="ECO:0007669"/>
    <property type="project" value="UniProtKB-KW"/>
</dbReference>
<dbReference type="GO" id="GO:0051603">
    <property type="term" value="P:proteolysis involved in protein catabolic process"/>
    <property type="evidence" value="ECO:0007669"/>
    <property type="project" value="InterPro"/>
</dbReference>
<dbReference type="CDD" id="cd01913">
    <property type="entry name" value="protease_HslV"/>
    <property type="match status" value="1"/>
</dbReference>
<dbReference type="FunFam" id="3.60.20.10:FF:000002">
    <property type="entry name" value="ATP-dependent protease subunit HslV"/>
    <property type="match status" value="1"/>
</dbReference>
<dbReference type="Gene3D" id="3.60.20.10">
    <property type="entry name" value="Glutamine Phosphoribosylpyrophosphate, subunit 1, domain 1"/>
    <property type="match status" value="1"/>
</dbReference>
<dbReference type="HAMAP" id="MF_00248">
    <property type="entry name" value="HslV"/>
    <property type="match status" value="1"/>
</dbReference>
<dbReference type="InterPro" id="IPR022281">
    <property type="entry name" value="ATP-dep_Prtase_HsIV_su"/>
</dbReference>
<dbReference type="InterPro" id="IPR029055">
    <property type="entry name" value="Ntn_hydrolases_N"/>
</dbReference>
<dbReference type="InterPro" id="IPR001353">
    <property type="entry name" value="Proteasome_sua/b"/>
</dbReference>
<dbReference type="InterPro" id="IPR023333">
    <property type="entry name" value="Proteasome_suB-type"/>
</dbReference>
<dbReference type="NCBIfam" id="TIGR03692">
    <property type="entry name" value="ATP_dep_HslV"/>
    <property type="match status" value="1"/>
</dbReference>
<dbReference type="NCBIfam" id="NF003964">
    <property type="entry name" value="PRK05456.1"/>
    <property type="match status" value="1"/>
</dbReference>
<dbReference type="PANTHER" id="PTHR32194:SF0">
    <property type="entry name" value="ATP-DEPENDENT PROTEASE SUBUNIT HSLV"/>
    <property type="match status" value="1"/>
</dbReference>
<dbReference type="PANTHER" id="PTHR32194">
    <property type="entry name" value="METALLOPROTEASE TLDD"/>
    <property type="match status" value="1"/>
</dbReference>
<dbReference type="Pfam" id="PF00227">
    <property type="entry name" value="Proteasome"/>
    <property type="match status" value="1"/>
</dbReference>
<dbReference type="PIRSF" id="PIRSF039093">
    <property type="entry name" value="HslV"/>
    <property type="match status" value="1"/>
</dbReference>
<dbReference type="SUPFAM" id="SSF56235">
    <property type="entry name" value="N-terminal nucleophile aminohydrolases (Ntn hydrolases)"/>
    <property type="match status" value="1"/>
</dbReference>
<dbReference type="PROSITE" id="PS51476">
    <property type="entry name" value="PROTEASOME_BETA_2"/>
    <property type="match status" value="1"/>
</dbReference>
<name>HSLV_MANSM</name>
<proteinExistence type="inferred from homology"/>
<evidence type="ECO:0000250" key="1"/>
<evidence type="ECO:0000255" key="2">
    <source>
        <dbReference type="HAMAP-Rule" id="MF_00248"/>
    </source>
</evidence>
<organism>
    <name type="scientific">Mannheimia succiniciproducens (strain KCTC 0769BP / MBEL55E)</name>
    <dbReference type="NCBI Taxonomy" id="221988"/>
    <lineage>
        <taxon>Bacteria</taxon>
        <taxon>Pseudomonadati</taxon>
        <taxon>Pseudomonadota</taxon>
        <taxon>Gammaproteobacteria</taxon>
        <taxon>Pasteurellales</taxon>
        <taxon>Pasteurellaceae</taxon>
        <taxon>Basfia</taxon>
    </lineage>
</organism>
<protein>
    <recommendedName>
        <fullName evidence="2">ATP-dependent protease subunit HslV</fullName>
        <ecNumber evidence="2">3.4.25.2</ecNumber>
    </recommendedName>
</protein>
<reference key="1">
    <citation type="journal article" date="2004" name="Nat. Biotechnol.">
        <title>The genome sequence of the capnophilic rumen bacterium Mannheimia succiniciproducens.</title>
        <authorList>
            <person name="Hong S.H."/>
            <person name="Kim J.S."/>
            <person name="Lee S.Y."/>
            <person name="In Y.H."/>
            <person name="Choi S.S."/>
            <person name="Rih J.-K."/>
            <person name="Kim C.H."/>
            <person name="Jeong H."/>
            <person name="Hur C.G."/>
            <person name="Kim J.J."/>
        </authorList>
    </citation>
    <scope>NUCLEOTIDE SEQUENCE [LARGE SCALE GENOMIC DNA]</scope>
    <source>
        <strain>KCTC 0769BP / MBEL55E</strain>
    </source>
</reference>
<gene>
    <name evidence="2" type="primary">hslV</name>
    <name type="ordered locus">MS0271</name>
</gene>
<feature type="initiator methionine" description="Removed" evidence="1">
    <location>
        <position position="1"/>
    </location>
</feature>
<feature type="chain" id="PRO_0000148123" description="ATP-dependent protease subunit HslV">
    <location>
        <begin position="2"/>
        <end position="173"/>
    </location>
</feature>
<feature type="active site" evidence="2">
    <location>
        <position position="2"/>
    </location>
</feature>
<feature type="binding site" evidence="2">
    <location>
        <position position="158"/>
    </location>
    <ligand>
        <name>Na(+)</name>
        <dbReference type="ChEBI" id="CHEBI:29101"/>
    </ligand>
</feature>
<feature type="binding site" evidence="2">
    <location>
        <position position="161"/>
    </location>
    <ligand>
        <name>Na(+)</name>
        <dbReference type="ChEBI" id="CHEBI:29101"/>
    </ligand>
</feature>
<feature type="binding site" evidence="2">
    <location>
        <position position="164"/>
    </location>
    <ligand>
        <name>Na(+)</name>
        <dbReference type="ChEBI" id="CHEBI:29101"/>
    </ligand>
</feature>
<sequence length="173" mass="18807">MTTIVCVRKNGKVAIGGDGQATLGNCVEKGTVRKVRRLYKDKVVTGFAGSTADAFILRDLFEKKLELHQGHLVKAAVELAKEWRTERSLRRLEAMMIVANESEFLLVSGSGDVIEPEFDVLAIGSGGNFAKSAALALLRTNNELSAAEIVKQALIIAGDIDIYTNHNHVIEEV</sequence>
<comment type="function">
    <text evidence="2">Protease subunit of a proteasome-like degradation complex believed to be a general protein degrading machinery.</text>
</comment>
<comment type="catalytic activity">
    <reaction evidence="2">
        <text>ATP-dependent cleavage of peptide bonds with broad specificity.</text>
        <dbReference type="EC" id="3.4.25.2"/>
    </reaction>
</comment>
<comment type="activity regulation">
    <text evidence="2">Allosterically activated by HslU binding.</text>
</comment>
<comment type="subunit">
    <text evidence="2">A double ring-shaped homohexamer of HslV is capped on each side by a ring-shaped HslU homohexamer. The assembly of the HslU/HslV complex is dependent on binding of ATP.</text>
</comment>
<comment type="subcellular location">
    <subcellularLocation>
        <location evidence="2">Cytoplasm</location>
    </subcellularLocation>
</comment>
<comment type="similarity">
    <text evidence="2">Belongs to the peptidase T1B family. HslV subfamily.</text>
</comment>
<keyword id="KW-0021">Allosteric enzyme</keyword>
<keyword id="KW-0963">Cytoplasm</keyword>
<keyword id="KW-0378">Hydrolase</keyword>
<keyword id="KW-0479">Metal-binding</keyword>
<keyword id="KW-0645">Protease</keyword>
<keyword id="KW-0915">Sodium</keyword>
<keyword id="KW-0888">Threonine protease</keyword>